<sequence>MSSGALFPSLVSGSRSSSSKYLVEFRAGKMTLKGSTVTPDKRKGTVYIQQTDDSLIHFCWKDRTSGNVEDDLIIFPDDCEFKRVNQCTTGRVYVLKFKAGSKRLFFWMQEPKTDKDDEYCRKVNEYLNNPPMPGALGSGGGGGHELSALGEGGLQSLLGNMSHNQLMQLIGPTGLGGLGALAGPGLASLLGSGGPATSSSTSSSRSQSAAATPSSGSAARLSSTQAPTTPVTPAATSSGSPTVTPTTPAAQTPSLPAGPASSTQPIQLSDLQSILATMNVPAMPTEGSGVDLASVLTPDVMAPILANPEVQQRLLPYLPSGESLPQSAEEIQNTLTSPQFQQAMSMFSSALASGQLGPLMNQFGLPSEAVDAANKGDVEAFAKAMEGSDSKTDDGDSKDKKDDDEDMSLD</sequence>
<dbReference type="EMBL" id="BC066391">
    <property type="protein sequence ID" value="AAH66391.1"/>
    <property type="molecule type" value="mRNA"/>
</dbReference>
<dbReference type="RefSeq" id="XP_005162020.1">
    <property type="nucleotide sequence ID" value="XM_005161963.3"/>
</dbReference>
<dbReference type="SMR" id="Q6NZ09"/>
<dbReference type="FunCoup" id="Q6NZ09">
    <property type="interactions" value="1676"/>
</dbReference>
<dbReference type="STRING" id="7955.ENSDARP00000075874"/>
<dbReference type="iPTMnet" id="Q6NZ09"/>
<dbReference type="PaxDb" id="7955-ENSDARP00000075874"/>
<dbReference type="Ensembl" id="ENSDART00000180014">
    <property type="protein sequence ID" value="ENSDARP00000150387"/>
    <property type="gene ID" value="ENSDARG00000058560"/>
</dbReference>
<dbReference type="AGR" id="ZFIN:ZDB-GENE-040426-905"/>
<dbReference type="ZFIN" id="ZDB-GENE-040426-905">
    <property type="gene designation" value="adrm1"/>
</dbReference>
<dbReference type="eggNOG" id="KOG3037">
    <property type="taxonomic scope" value="Eukaryota"/>
</dbReference>
<dbReference type="InParanoid" id="Q6NZ09"/>
<dbReference type="OrthoDB" id="340431at2759"/>
<dbReference type="Reactome" id="R-DRE-1169091">
    <property type="pathway name" value="Activation of NF-kappaB in B cells"/>
</dbReference>
<dbReference type="Reactome" id="R-DRE-1236978">
    <property type="pathway name" value="Cross-presentation of soluble exogenous antigens (endosomes)"/>
</dbReference>
<dbReference type="Reactome" id="R-DRE-187577">
    <property type="pathway name" value="SCF(Skp2)-mediated degradation of p27/p21"/>
</dbReference>
<dbReference type="Reactome" id="R-DRE-349425">
    <property type="pathway name" value="Autodegradation of the E3 ubiquitin ligase COP1"/>
</dbReference>
<dbReference type="Reactome" id="R-DRE-350562">
    <property type="pathway name" value="Regulation of ornithine decarboxylase (ODC)"/>
</dbReference>
<dbReference type="Reactome" id="R-DRE-382556">
    <property type="pathway name" value="ABC-family proteins mediated transport"/>
</dbReference>
<dbReference type="Reactome" id="R-DRE-450408">
    <property type="pathway name" value="AUF1 (hnRNP D0) binds and destabilizes mRNA"/>
</dbReference>
<dbReference type="Reactome" id="R-DRE-4608870">
    <property type="pathway name" value="Asymmetric localization of PCP proteins"/>
</dbReference>
<dbReference type="Reactome" id="R-DRE-4641257">
    <property type="pathway name" value="Degradation of AXIN"/>
</dbReference>
<dbReference type="Reactome" id="R-DRE-4641258">
    <property type="pathway name" value="Degradation of DVL"/>
</dbReference>
<dbReference type="Reactome" id="R-DRE-5358346">
    <property type="pathway name" value="Hedgehog ligand biogenesis"/>
</dbReference>
<dbReference type="Reactome" id="R-DRE-5610780">
    <property type="pathway name" value="Degradation of GLI1 by the proteasome"/>
</dbReference>
<dbReference type="Reactome" id="R-DRE-5610785">
    <property type="pathway name" value="GLI3 is processed to GLI3R by the proteasome"/>
</dbReference>
<dbReference type="Reactome" id="R-DRE-5632684">
    <property type="pathway name" value="Hedgehog 'on' state"/>
</dbReference>
<dbReference type="Reactome" id="R-DRE-5687128">
    <property type="pathway name" value="MAPK6/MAPK4 signaling"/>
</dbReference>
<dbReference type="Reactome" id="R-DRE-5689603">
    <property type="pathway name" value="UCH proteinases"/>
</dbReference>
<dbReference type="Reactome" id="R-DRE-5689880">
    <property type="pathway name" value="Ub-specific processing proteases"/>
</dbReference>
<dbReference type="Reactome" id="R-DRE-68867">
    <property type="pathway name" value="Assembly of the pre-replicative complex"/>
</dbReference>
<dbReference type="Reactome" id="R-DRE-69017">
    <property type="pathway name" value="CDK-mediated phosphorylation and removal of Cdc6"/>
</dbReference>
<dbReference type="Reactome" id="R-DRE-69481">
    <property type="pathway name" value="G2/M Checkpoints"/>
</dbReference>
<dbReference type="Reactome" id="R-DRE-75815">
    <property type="pathway name" value="Ubiquitin-dependent degradation of Cyclin D"/>
</dbReference>
<dbReference type="Reactome" id="R-DRE-8852276">
    <property type="pathway name" value="The role of GTSE1 in G2/M progression after G2 checkpoint"/>
</dbReference>
<dbReference type="Reactome" id="R-DRE-8854050">
    <property type="pathway name" value="FBXL7 down-regulates AURKA during mitotic entry and in early mitosis"/>
</dbReference>
<dbReference type="Reactome" id="R-DRE-8939236">
    <property type="pathway name" value="RUNX1 regulates transcription of genes involved in differentiation of HSCs"/>
</dbReference>
<dbReference type="Reactome" id="R-DRE-8939902">
    <property type="pathway name" value="Regulation of RUNX2 expression and activity"/>
</dbReference>
<dbReference type="Reactome" id="R-DRE-8941858">
    <property type="pathway name" value="Regulation of RUNX3 expression and activity"/>
</dbReference>
<dbReference type="Reactome" id="R-DRE-8948751">
    <property type="pathway name" value="Regulation of PTEN stability and activity"/>
</dbReference>
<dbReference type="Reactome" id="R-DRE-8951664">
    <property type="pathway name" value="Neddylation"/>
</dbReference>
<dbReference type="Reactome" id="R-DRE-9755511">
    <property type="pathway name" value="KEAP1-NFE2L2 pathway"/>
</dbReference>
<dbReference type="Reactome" id="R-DRE-9762114">
    <property type="pathway name" value="GSK3B and BTRC:CUL1-mediated-degradation of NFE2L2"/>
</dbReference>
<dbReference type="Reactome" id="R-DRE-983168">
    <property type="pathway name" value="Antigen processing: Ubiquitination &amp; Proteasome degradation"/>
</dbReference>
<dbReference type="Reactome" id="R-DRE-9907900">
    <property type="pathway name" value="Proteasome assembly"/>
</dbReference>
<dbReference type="PRO" id="PR:Q6NZ09"/>
<dbReference type="Proteomes" id="UP000000437">
    <property type="component" value="Unplaced"/>
</dbReference>
<dbReference type="Bgee" id="ENSDARG00000058560">
    <property type="expression patterns" value="Expressed in muscle tissue and 23 other cell types or tissues"/>
</dbReference>
<dbReference type="ExpressionAtlas" id="Q6NZ09">
    <property type="expression patterns" value="baseline and differential"/>
</dbReference>
<dbReference type="GO" id="GO:0005737">
    <property type="term" value="C:cytoplasm"/>
    <property type="evidence" value="ECO:0007669"/>
    <property type="project" value="UniProtKB-SubCell"/>
</dbReference>
<dbReference type="GO" id="GO:0005634">
    <property type="term" value="C:nucleus"/>
    <property type="evidence" value="ECO:0007669"/>
    <property type="project" value="UniProtKB-SubCell"/>
</dbReference>
<dbReference type="GO" id="GO:0000502">
    <property type="term" value="C:proteasome complex"/>
    <property type="evidence" value="ECO:0000250"/>
    <property type="project" value="UniProtKB"/>
</dbReference>
<dbReference type="GO" id="GO:0008541">
    <property type="term" value="C:proteasome regulatory particle, lid subcomplex"/>
    <property type="evidence" value="ECO:0000318"/>
    <property type="project" value="GO_Central"/>
</dbReference>
<dbReference type="GO" id="GO:0061133">
    <property type="term" value="F:endopeptidase activator activity"/>
    <property type="evidence" value="ECO:0000250"/>
    <property type="project" value="UniProtKB"/>
</dbReference>
<dbReference type="GO" id="GO:0070628">
    <property type="term" value="F:proteasome binding"/>
    <property type="evidence" value="ECO:0000318"/>
    <property type="project" value="GO_Central"/>
</dbReference>
<dbReference type="GO" id="GO:0043248">
    <property type="term" value="P:proteasome assembly"/>
    <property type="evidence" value="ECO:0000250"/>
    <property type="project" value="UniProtKB"/>
</dbReference>
<dbReference type="CDD" id="cd13314">
    <property type="entry name" value="PH_Rpn13"/>
    <property type="match status" value="1"/>
</dbReference>
<dbReference type="FunFam" id="1.10.2020.20:FF:000001">
    <property type="entry name" value="Proteasomal ubiquitin receptor ADRM1"/>
    <property type="match status" value="1"/>
</dbReference>
<dbReference type="FunFam" id="2.30.29.70:FF:000001">
    <property type="entry name" value="Proteasomal ubiquitin receptor ADRM1"/>
    <property type="match status" value="1"/>
</dbReference>
<dbReference type="Gene3D" id="1.10.2020.20">
    <property type="match status" value="1"/>
</dbReference>
<dbReference type="Gene3D" id="2.30.29.70">
    <property type="entry name" value="Proteasomal ubiquitin receptor Rpn13/ADRM1"/>
    <property type="match status" value="1"/>
</dbReference>
<dbReference type="InterPro" id="IPR044867">
    <property type="entry name" value="DEUBAD_dom"/>
</dbReference>
<dbReference type="InterPro" id="IPR006773">
    <property type="entry name" value="Rpn13/ADRM1"/>
</dbReference>
<dbReference type="InterPro" id="IPR044868">
    <property type="entry name" value="Rpn13/ADRM1_Pru"/>
</dbReference>
<dbReference type="InterPro" id="IPR038633">
    <property type="entry name" value="Rpn13/ADRM1_Pru_sf"/>
</dbReference>
<dbReference type="InterPro" id="IPR032368">
    <property type="entry name" value="RPN13_DEUBAD"/>
</dbReference>
<dbReference type="InterPro" id="IPR038108">
    <property type="entry name" value="RPN13_DEUBAD_sf"/>
</dbReference>
<dbReference type="PANTHER" id="PTHR12225">
    <property type="entry name" value="ADHESION REGULATING MOLECULE 1 110 KDA CELL MEMBRANE GLYCOPROTEIN"/>
    <property type="match status" value="1"/>
</dbReference>
<dbReference type="PANTHER" id="PTHR12225:SF0">
    <property type="entry name" value="PROTEASOMAL UBIQUITIN RECEPTOR ADRM1"/>
    <property type="match status" value="1"/>
</dbReference>
<dbReference type="Pfam" id="PF04683">
    <property type="entry name" value="Rpn13_ADRM1_Pru"/>
    <property type="match status" value="1"/>
</dbReference>
<dbReference type="Pfam" id="PF16550">
    <property type="entry name" value="RPN13_C"/>
    <property type="match status" value="1"/>
</dbReference>
<dbReference type="PROSITE" id="PS51916">
    <property type="entry name" value="DEUBAD"/>
    <property type="match status" value="1"/>
</dbReference>
<dbReference type="PROSITE" id="PS51917">
    <property type="entry name" value="PRU"/>
    <property type="match status" value="1"/>
</dbReference>
<proteinExistence type="evidence at protein level"/>
<name>ADRM1_DANRE</name>
<evidence type="ECO:0000250" key="1">
    <source>
        <dbReference type="UniProtKB" id="Q16186"/>
    </source>
</evidence>
<evidence type="ECO:0000255" key="2">
    <source>
        <dbReference type="PROSITE-ProRule" id="PRU01264"/>
    </source>
</evidence>
<evidence type="ECO:0000255" key="3">
    <source>
        <dbReference type="PROSITE-ProRule" id="PRU01265"/>
    </source>
</evidence>
<evidence type="ECO:0000256" key="4">
    <source>
        <dbReference type="SAM" id="MobiDB-lite"/>
    </source>
</evidence>
<evidence type="ECO:0000269" key="5">
    <source>
    </source>
</evidence>
<evidence type="ECO:0000305" key="6"/>
<keyword id="KW-0963">Cytoplasm</keyword>
<keyword id="KW-0539">Nucleus</keyword>
<keyword id="KW-0597">Phosphoprotein</keyword>
<keyword id="KW-0647">Proteasome</keyword>
<keyword id="KW-1185">Reference proteome</keyword>
<comment type="function">
    <text evidence="1">Component of the 26S proteasome, a multiprotein complex involved in the ATP-dependent degradation of ubiquitinated proteins. This complex plays a key role in the maintenance of protein homeostasis by removing misfolded or damaged proteins, which could impair cellular functions, and by removing proteins whose functions are no longer required. Therefore, the proteasome participates in numerous cellular processes, including cell cycle progression, apoptosis, or DNA damage repair. Within the complex, functions as a proteasomal ubiquitin receptor.</text>
</comment>
<comment type="subunit">
    <text evidence="1">Component of the 19S proteasome regulatory particle complex. The 26S proteasome consists of a 20S core particle (CP) and two 19S regulatory subunits (RP).</text>
</comment>
<comment type="subcellular location">
    <subcellularLocation>
        <location evidence="1">Cytoplasm</location>
    </subcellularLocation>
    <subcellularLocation>
        <location evidence="1">Nucleus</location>
    </subcellularLocation>
</comment>
<comment type="similarity">
    <text evidence="6">Belongs to the ADRM1 family.</text>
</comment>
<accession>Q6NZ09</accession>
<feature type="chain" id="PRO_0000286071" description="Proteasomal ubiquitin receptor ADRM1">
    <location>
        <begin position="1"/>
        <end position="410"/>
    </location>
</feature>
<feature type="domain" description="Pru" evidence="3">
    <location>
        <begin position="17"/>
        <end position="130"/>
    </location>
</feature>
<feature type="domain" description="DEUBAD" evidence="2">
    <location>
        <begin position="281"/>
        <end position="395"/>
    </location>
</feature>
<feature type="region of interest" description="Disordered" evidence="4">
    <location>
        <begin position="191"/>
        <end position="264"/>
    </location>
</feature>
<feature type="region of interest" description="Disordered" evidence="4">
    <location>
        <begin position="381"/>
        <end position="410"/>
    </location>
</feature>
<feature type="compositionally biased region" description="Low complexity" evidence="4">
    <location>
        <begin position="191"/>
        <end position="257"/>
    </location>
</feature>
<feature type="compositionally biased region" description="Basic and acidic residues" evidence="4">
    <location>
        <begin position="381"/>
        <end position="401"/>
    </location>
</feature>
<feature type="modified residue" description="Phosphoserine" evidence="5">
    <location>
        <position position="18"/>
    </location>
</feature>
<reference key="1">
    <citation type="submission" date="2004-02" db="EMBL/GenBank/DDBJ databases">
        <authorList>
            <consortium name="NIH - Zebrafish Gene Collection (ZGC) project"/>
        </authorList>
    </citation>
    <scope>NUCLEOTIDE SEQUENCE [LARGE SCALE MRNA]</scope>
    <source>
        <tissue>Embryo</tissue>
    </source>
</reference>
<reference key="2">
    <citation type="journal article" date="2008" name="J. Proteome Res.">
        <title>Online automated in vivo zebrafish phosphoproteomics: from large-scale analysis down to a single embryo.</title>
        <authorList>
            <person name="Lemeer S."/>
            <person name="Pinkse M.W.H."/>
            <person name="Mohammed S."/>
            <person name="van Breukelen B."/>
            <person name="den Hertog J."/>
            <person name="Slijper M."/>
            <person name="Heck A.J.R."/>
        </authorList>
    </citation>
    <scope>PHOSPHORYLATION [LARGE SCALE ANALYSIS] AT SER-18</scope>
    <scope>IDENTIFICATION BY MASS SPECTROMETRY</scope>
    <source>
        <tissue>Embryo</tissue>
    </source>
</reference>
<protein>
    <recommendedName>
        <fullName>Proteasomal ubiquitin receptor ADRM1</fullName>
    </recommendedName>
</protein>
<gene>
    <name type="primary">adrm1b</name>
</gene>
<organism>
    <name type="scientific">Danio rerio</name>
    <name type="common">Zebrafish</name>
    <name type="synonym">Brachydanio rerio</name>
    <dbReference type="NCBI Taxonomy" id="7955"/>
    <lineage>
        <taxon>Eukaryota</taxon>
        <taxon>Metazoa</taxon>
        <taxon>Chordata</taxon>
        <taxon>Craniata</taxon>
        <taxon>Vertebrata</taxon>
        <taxon>Euteleostomi</taxon>
        <taxon>Actinopterygii</taxon>
        <taxon>Neopterygii</taxon>
        <taxon>Teleostei</taxon>
        <taxon>Ostariophysi</taxon>
        <taxon>Cypriniformes</taxon>
        <taxon>Danionidae</taxon>
        <taxon>Danioninae</taxon>
        <taxon>Danio</taxon>
    </lineage>
</organism>